<name>MOSC_RHIML</name>
<sequence>MTRTSPRHHAPSETKRRVPMGGVHTNPGKKLTITAVAFQFFINGLVLAAWATSIPHVKNAYSFNDAELGVLLLIMAAGALLFMSLAGYFSHVFGSRRMSIQSALLFPSALVLIFAAPNCMTFLCSIVLFGAANGAMDVLMNHQAKALEENGFPRIMAFLHGCSSTGILAGIMTFGVIGDGHYVARSVTLLTGILIVARWLFPHLLDDVRSGEHRLAIGELRNCKLLMFGILSFLTMVTDGAIAEWSKLYLIRVEQVTDQVGSLGYVAFTLLMIAGRISGDRVKDAIGCRALIAISGSLASAGMTTALFMPSFAGKLAGFALLGLGMANLVPIIFSEAASMNTVSKTVGLTFVSVCGYSGFLVGPPIIGRIAEAVGLGRALLFIIAVGVIVACASVFFDRHRSGQPEP</sequence>
<comment type="function">
    <text>May be a membrane transport protein that could either transport a precursor for rhizopine biosynthesis into bacteroids or the finished product from the bacteroids.</text>
</comment>
<comment type="subcellular location">
    <subcellularLocation>
        <location evidence="3">Cell membrane</location>
        <topology evidence="3">Multi-pass membrane protein</topology>
    </subcellularLocation>
</comment>
<comment type="alternative products">
    <event type="alternative initiation"/>
    <isoform>
        <id>Q07609-1</id>
        <name>43 kDa</name>
        <sequence type="displayed"/>
    </isoform>
    <isoform>
        <id>Q07609-2</id>
        <name>41 kDa</name>
        <sequence type="described" ref="VSP_018820"/>
    </isoform>
</comment>
<feature type="chain" id="PRO_0000021729" description="Membrane protein MosC">
    <location>
        <begin position="1"/>
        <end position="407"/>
    </location>
</feature>
<feature type="transmembrane region" description="Helical" evidence="1">
    <location>
        <begin position="31"/>
        <end position="51"/>
    </location>
</feature>
<feature type="transmembrane region" description="Helical" evidence="1">
    <location>
        <begin position="69"/>
        <end position="89"/>
    </location>
</feature>
<feature type="transmembrane region" description="Helical" evidence="1">
    <location>
        <begin position="109"/>
        <end position="129"/>
    </location>
</feature>
<feature type="transmembrane region" description="Helical" evidence="1">
    <location>
        <begin position="157"/>
        <end position="177"/>
    </location>
</feature>
<feature type="transmembrane region" description="Helical" evidence="1">
    <location>
        <begin position="186"/>
        <end position="206"/>
    </location>
</feature>
<feature type="transmembrane region" description="Helical" evidence="1">
    <location>
        <begin position="225"/>
        <end position="245"/>
    </location>
</feature>
<feature type="transmembrane region" description="Helical" evidence="1">
    <location>
        <begin position="255"/>
        <end position="275"/>
    </location>
</feature>
<feature type="transmembrane region" description="Helical" evidence="1">
    <location>
        <begin position="290"/>
        <end position="310"/>
    </location>
</feature>
<feature type="transmembrane region" description="Helical" evidence="1">
    <location>
        <begin position="316"/>
        <end position="336"/>
    </location>
</feature>
<feature type="transmembrane region" description="Helical" evidence="1">
    <location>
        <begin position="347"/>
        <end position="367"/>
    </location>
</feature>
<feature type="transmembrane region" description="Helical" evidence="1">
    <location>
        <begin position="377"/>
        <end position="397"/>
    </location>
</feature>
<feature type="region of interest" description="Disordered" evidence="2">
    <location>
        <begin position="1"/>
        <end position="24"/>
    </location>
</feature>
<feature type="splice variant" id="VSP_018820" description="In isoform 41 kDa." evidence="3">
    <location>
        <begin position="1"/>
        <end position="19"/>
    </location>
</feature>
<feature type="sequence variant" description="In strain: RM220-3.">
    <original>N</original>
    <variation>T</variation>
    <location>
        <position position="64"/>
    </location>
</feature>
<feature type="sequence variant" description="In strain: RM220-3.">
    <original>L</original>
    <variation>G</variation>
    <location>
        <position position="71"/>
    </location>
</feature>
<feature type="sequence variant" description="In strain: RM220-3.">
    <original>S</original>
    <variation>P</variation>
    <location>
        <position position="90"/>
    </location>
</feature>
<feature type="sequence variant" description="In strain: RM220-3.">
    <original>I</original>
    <variation>N</variation>
    <location>
        <position position="100"/>
    </location>
</feature>
<feature type="sequence variant" description="In strain: RM220-3.">
    <original>S</original>
    <variation>R</variation>
    <location>
        <position position="164"/>
    </location>
</feature>
<feature type="sequence variant" description="In strain: RM220-3.">
    <original>F</original>
    <variation>L</variation>
    <location>
        <position position="174"/>
    </location>
</feature>
<feature type="sequence variant" description="In strain: RM220-3.">
    <original>A</original>
    <variation>G</variation>
    <location>
        <position position="184"/>
    </location>
</feature>
<feature type="sequence variant" description="In strain: RM220-3.">
    <original>EHR</original>
    <variation>KQK</variation>
    <location>
        <begin position="212"/>
        <end position="214"/>
    </location>
</feature>
<feature type="sequence variant" description="In strain: RM220-3.">
    <original>E</original>
    <variation>K</variation>
    <location>
        <position position="219"/>
    </location>
</feature>
<feature type="sequence variant" description="In strain: RM220-3.">
    <original>E</original>
    <variation>G</variation>
    <location>
        <position position="254"/>
    </location>
</feature>
<feature type="sequence conflict" description="In Ref. 1; AAA26303." evidence="3" ref="1">
    <original>RIAEAVGLGRALLFII</original>
    <variation>ASRRPLGSGELCSSSF</variation>
    <location>
        <begin position="369"/>
        <end position="384"/>
    </location>
</feature>
<proteinExistence type="predicted"/>
<accession>Q07609</accession>
<accession>Q52891</accession>
<organism>
    <name type="scientific">Rhizobium meliloti</name>
    <name type="common">Ensifer meliloti</name>
    <name type="synonym">Sinorhizobium meliloti</name>
    <dbReference type="NCBI Taxonomy" id="382"/>
    <lineage>
        <taxon>Bacteria</taxon>
        <taxon>Pseudomonadati</taxon>
        <taxon>Pseudomonadota</taxon>
        <taxon>Alphaproteobacteria</taxon>
        <taxon>Hyphomicrobiales</taxon>
        <taxon>Rhizobiaceae</taxon>
        <taxon>Sinorhizobium/Ensifer group</taxon>
        <taxon>Sinorhizobium</taxon>
    </lineage>
</organism>
<gene>
    <name type="primary">mosC</name>
</gene>
<reference key="1">
    <citation type="journal article" date="1993" name="J. Bacteriol.">
        <title>The Rhizobium meliloti rhizopine mos locus is a mosaic structure facilitating its symbiotic regulation.</title>
        <authorList>
            <person name="Murphy P.J."/>
            <person name="Trenz S.P."/>
            <person name="Grzemski W."/>
            <person name="de Bruijn F.J."/>
            <person name="Schell J."/>
        </authorList>
    </citation>
    <scope>NUCLEOTIDE SEQUENCE [GENOMIC DNA]</scope>
    <source>
        <strain>L5-30</strain>
    </source>
</reference>
<reference key="2">
    <citation type="journal article" date="1995" name="Microbiology">
        <title>Rhizobium meliloti lacking mosA synthesizes the rhizopine scyllo-inosamine in place of 3-O-methyl-scyllo-inosamine.</title>
        <authorList>
            <person name="Rao J.P."/>
            <person name="Grzemski W."/>
            <person name="Murphy P.J."/>
        </authorList>
    </citation>
    <scope>NUCLEOTIDE SEQUENCE [GENOMIC DNA]</scope>
    <source>
        <strain>RM220-3</strain>
    </source>
</reference>
<keyword id="KW-0024">Alternative initiation</keyword>
<keyword id="KW-1003">Cell membrane</keyword>
<keyword id="KW-0472">Membrane</keyword>
<keyword id="KW-0812">Transmembrane</keyword>
<keyword id="KW-1133">Transmembrane helix</keyword>
<keyword id="KW-0813">Transport</keyword>
<evidence type="ECO:0000255" key="1"/>
<evidence type="ECO:0000256" key="2">
    <source>
        <dbReference type="SAM" id="MobiDB-lite"/>
    </source>
</evidence>
<evidence type="ECO:0000305" key="3"/>
<protein>
    <recommendedName>
        <fullName>Membrane protein MosC</fullName>
    </recommendedName>
</protein>
<dbReference type="EMBL" id="L17071">
    <property type="protein sequence ID" value="AAA26303.1"/>
    <property type="molecule type" value="Genomic_DNA"/>
</dbReference>
<dbReference type="EMBL" id="U23753">
    <property type="protein sequence ID" value="AAA91314.1"/>
    <property type="molecule type" value="Genomic_DNA"/>
</dbReference>
<dbReference type="PIR" id="D53308">
    <property type="entry name" value="D53308"/>
</dbReference>
<dbReference type="SMR" id="Q07609"/>
<dbReference type="TCDB" id="2.A.1.60.1">
    <property type="family name" value="the major facilitator superfamily (mfs)"/>
</dbReference>
<dbReference type="GO" id="GO:0005886">
    <property type="term" value="C:plasma membrane"/>
    <property type="evidence" value="ECO:0007669"/>
    <property type="project" value="UniProtKB-SubCell"/>
</dbReference>
<dbReference type="GO" id="GO:0022857">
    <property type="term" value="F:transmembrane transporter activity"/>
    <property type="evidence" value="ECO:0007669"/>
    <property type="project" value="InterPro"/>
</dbReference>
<dbReference type="CDD" id="cd17393">
    <property type="entry name" value="MFS_MosC_like"/>
    <property type="match status" value="1"/>
</dbReference>
<dbReference type="Gene3D" id="1.20.1250.20">
    <property type="entry name" value="MFS general substrate transporter like domains"/>
    <property type="match status" value="2"/>
</dbReference>
<dbReference type="InterPro" id="IPR011701">
    <property type="entry name" value="MFS"/>
</dbReference>
<dbReference type="InterPro" id="IPR036259">
    <property type="entry name" value="MFS_trans_sf"/>
</dbReference>
<dbReference type="InterPro" id="IPR051788">
    <property type="entry name" value="MFS_Transporter"/>
</dbReference>
<dbReference type="PANTHER" id="PTHR23514">
    <property type="entry name" value="BYPASS OF STOP CODON PROTEIN 6"/>
    <property type="match status" value="1"/>
</dbReference>
<dbReference type="PANTHER" id="PTHR23514:SF13">
    <property type="entry name" value="INNER MEMBRANE PROTEIN YBJJ"/>
    <property type="match status" value="1"/>
</dbReference>
<dbReference type="Pfam" id="PF07690">
    <property type="entry name" value="MFS_1"/>
    <property type="match status" value="1"/>
</dbReference>
<dbReference type="SUPFAM" id="SSF103473">
    <property type="entry name" value="MFS general substrate transporter"/>
    <property type="match status" value="1"/>
</dbReference>